<reference key="1">
    <citation type="journal article" date="2011" name="PLoS ONE">
        <title>The genome of Akkermansia muciniphila, a dedicated intestinal mucin degrader, and its use in exploring intestinal metagenomes.</title>
        <authorList>
            <person name="van Passel M.W."/>
            <person name="Kant R."/>
            <person name="Zoetendal E.G."/>
            <person name="Plugge C.M."/>
            <person name="Derrien M."/>
            <person name="Malfatti S.A."/>
            <person name="Chain P.S."/>
            <person name="Woyke T."/>
            <person name="Palva A."/>
            <person name="de Vos W.M."/>
            <person name="Smidt H."/>
        </authorList>
    </citation>
    <scope>NUCLEOTIDE SEQUENCE [LARGE SCALE GENOMIC DNA]</scope>
    <source>
        <strain>ATCC BAA-835 / DSM 22959 / JCM 33894 / BCRC 81048 / CCUG 64013 / CIP 107961 / Muc</strain>
    </source>
</reference>
<evidence type="ECO:0000255" key="1">
    <source>
        <dbReference type="HAMAP-Rule" id="MF_00387"/>
    </source>
</evidence>
<accession>B2ULY0</accession>
<organism>
    <name type="scientific">Akkermansia muciniphila (strain ATCC BAA-835 / DSM 22959 / JCM 33894 / BCRC 81048 / CCUG 64013 / CIP 107961 / Muc)</name>
    <dbReference type="NCBI Taxonomy" id="349741"/>
    <lineage>
        <taxon>Bacteria</taxon>
        <taxon>Pseudomonadati</taxon>
        <taxon>Verrucomicrobiota</taxon>
        <taxon>Verrucomicrobiia</taxon>
        <taxon>Verrucomicrobiales</taxon>
        <taxon>Akkermansiaceae</taxon>
        <taxon>Akkermansia</taxon>
    </lineage>
</organism>
<name>LPXA_AKKM8</name>
<comment type="function">
    <text evidence="1">Involved in the biosynthesis of lipid A, a phosphorylated glycolipid that anchors the lipopolysaccharide to the outer membrane of the cell.</text>
</comment>
<comment type="catalytic activity">
    <reaction evidence="1">
        <text>a (3R)-hydroxyacyl-[ACP] + UDP-N-acetyl-alpha-D-glucosamine = a UDP-3-O-[(3R)-3-hydroxyacyl]-N-acetyl-alpha-D-glucosamine + holo-[ACP]</text>
        <dbReference type="Rhea" id="RHEA:67812"/>
        <dbReference type="Rhea" id="RHEA-COMP:9685"/>
        <dbReference type="Rhea" id="RHEA-COMP:9945"/>
        <dbReference type="ChEBI" id="CHEBI:57705"/>
        <dbReference type="ChEBI" id="CHEBI:64479"/>
        <dbReference type="ChEBI" id="CHEBI:78827"/>
        <dbReference type="ChEBI" id="CHEBI:173225"/>
        <dbReference type="EC" id="2.3.1.129"/>
    </reaction>
</comment>
<comment type="pathway">
    <text evidence="1">Glycolipid biosynthesis; lipid IV(A) biosynthesis; lipid IV(A) from (3R)-3-hydroxytetradecanoyl-[acyl-carrier-protein] and UDP-N-acetyl-alpha-D-glucosamine: step 1/6.</text>
</comment>
<comment type="subunit">
    <text evidence="1">Homotrimer.</text>
</comment>
<comment type="subcellular location">
    <subcellularLocation>
        <location evidence="1">Cytoplasm</location>
    </subcellularLocation>
</comment>
<comment type="similarity">
    <text evidence="1">Belongs to the transferase hexapeptide repeat family. LpxA subfamily.</text>
</comment>
<proteinExistence type="inferred from homology"/>
<feature type="chain" id="PRO_1000122682" description="Acyl-[acyl-carrier-protein]--UDP-N-acetylglucosamine O-acyltransferase">
    <location>
        <begin position="1"/>
        <end position="259"/>
    </location>
</feature>
<protein>
    <recommendedName>
        <fullName evidence="1">Acyl-[acyl-carrier-protein]--UDP-N-acetylglucosamine O-acyltransferase</fullName>
        <shortName evidence="1">UDP-N-acetylglucosamine acyltransferase</shortName>
        <ecNumber evidence="1">2.3.1.129</ecNumber>
    </recommendedName>
</protein>
<gene>
    <name evidence="1" type="primary">lpxA</name>
    <name type="ordered locus">Amuc_0180</name>
</gene>
<dbReference type="EC" id="2.3.1.129" evidence="1"/>
<dbReference type="EMBL" id="CP001071">
    <property type="protein sequence ID" value="ACD04024.1"/>
    <property type="molecule type" value="Genomic_DNA"/>
</dbReference>
<dbReference type="RefSeq" id="WP_012419239.1">
    <property type="nucleotide sequence ID" value="NZ_CP071807.1"/>
</dbReference>
<dbReference type="SMR" id="B2ULY0"/>
<dbReference type="STRING" id="349741.Amuc_0180"/>
<dbReference type="PaxDb" id="349741-Amuc_0180"/>
<dbReference type="GeneID" id="60879606"/>
<dbReference type="KEGG" id="amu:Amuc_0180"/>
<dbReference type="eggNOG" id="COG1043">
    <property type="taxonomic scope" value="Bacteria"/>
</dbReference>
<dbReference type="HOGENOM" id="CLU_061249_0_0_0"/>
<dbReference type="OrthoDB" id="9807278at2"/>
<dbReference type="BioCyc" id="AMUC349741:G1GBX-206-MONOMER"/>
<dbReference type="UniPathway" id="UPA00359">
    <property type="reaction ID" value="UER00477"/>
</dbReference>
<dbReference type="Proteomes" id="UP000001031">
    <property type="component" value="Chromosome"/>
</dbReference>
<dbReference type="GO" id="GO:0005737">
    <property type="term" value="C:cytoplasm"/>
    <property type="evidence" value="ECO:0007669"/>
    <property type="project" value="UniProtKB-SubCell"/>
</dbReference>
<dbReference type="GO" id="GO:0016020">
    <property type="term" value="C:membrane"/>
    <property type="evidence" value="ECO:0007669"/>
    <property type="project" value="GOC"/>
</dbReference>
<dbReference type="GO" id="GO:0008780">
    <property type="term" value="F:acyl-[acyl-carrier-protein]-UDP-N-acetylglucosamine O-acyltransferase activity"/>
    <property type="evidence" value="ECO:0007669"/>
    <property type="project" value="UniProtKB-UniRule"/>
</dbReference>
<dbReference type="GO" id="GO:0009245">
    <property type="term" value="P:lipid A biosynthetic process"/>
    <property type="evidence" value="ECO:0007669"/>
    <property type="project" value="UniProtKB-UniRule"/>
</dbReference>
<dbReference type="CDD" id="cd03351">
    <property type="entry name" value="LbH_UDP-GlcNAc_AT"/>
    <property type="match status" value="1"/>
</dbReference>
<dbReference type="Gene3D" id="2.160.10.10">
    <property type="entry name" value="Hexapeptide repeat proteins"/>
    <property type="match status" value="1"/>
</dbReference>
<dbReference type="Gene3D" id="1.20.1180.10">
    <property type="entry name" value="Udp N-acetylglucosamine O-acyltransferase, C-terminal domain"/>
    <property type="match status" value="1"/>
</dbReference>
<dbReference type="HAMAP" id="MF_00387">
    <property type="entry name" value="LpxA"/>
    <property type="match status" value="1"/>
</dbReference>
<dbReference type="InterPro" id="IPR029098">
    <property type="entry name" value="Acetyltransf_C"/>
</dbReference>
<dbReference type="InterPro" id="IPR037157">
    <property type="entry name" value="Acetyltransf_C_sf"/>
</dbReference>
<dbReference type="InterPro" id="IPR001451">
    <property type="entry name" value="Hexapep"/>
</dbReference>
<dbReference type="InterPro" id="IPR010137">
    <property type="entry name" value="Lipid_A_LpxA"/>
</dbReference>
<dbReference type="InterPro" id="IPR011004">
    <property type="entry name" value="Trimer_LpxA-like_sf"/>
</dbReference>
<dbReference type="NCBIfam" id="TIGR01852">
    <property type="entry name" value="lipid_A_lpxA"/>
    <property type="match status" value="1"/>
</dbReference>
<dbReference type="NCBIfam" id="NF003657">
    <property type="entry name" value="PRK05289.1"/>
    <property type="match status" value="1"/>
</dbReference>
<dbReference type="PANTHER" id="PTHR43480">
    <property type="entry name" value="ACYL-[ACYL-CARRIER-PROTEIN]--UDP-N-ACETYLGLUCOSAMINE O-ACYLTRANSFERASE"/>
    <property type="match status" value="1"/>
</dbReference>
<dbReference type="PANTHER" id="PTHR43480:SF1">
    <property type="entry name" value="ACYL-[ACYL-CARRIER-PROTEIN]--UDP-N-ACETYLGLUCOSAMINE O-ACYLTRANSFERASE, MITOCHONDRIAL-RELATED"/>
    <property type="match status" value="1"/>
</dbReference>
<dbReference type="Pfam" id="PF13720">
    <property type="entry name" value="Acetyltransf_11"/>
    <property type="match status" value="1"/>
</dbReference>
<dbReference type="Pfam" id="PF00132">
    <property type="entry name" value="Hexapep"/>
    <property type="match status" value="1"/>
</dbReference>
<dbReference type="PIRSF" id="PIRSF000456">
    <property type="entry name" value="UDP-GlcNAc_acltr"/>
    <property type="match status" value="1"/>
</dbReference>
<dbReference type="SUPFAM" id="SSF51161">
    <property type="entry name" value="Trimeric LpxA-like enzymes"/>
    <property type="match status" value="1"/>
</dbReference>
<keyword id="KW-0012">Acyltransferase</keyword>
<keyword id="KW-0963">Cytoplasm</keyword>
<keyword id="KW-0441">Lipid A biosynthesis</keyword>
<keyword id="KW-0444">Lipid biosynthesis</keyword>
<keyword id="KW-0443">Lipid metabolism</keyword>
<keyword id="KW-1185">Reference proteome</keyword>
<keyword id="KW-0677">Repeat</keyword>
<keyword id="KW-0808">Transferase</keyword>
<sequence length="259" mass="28059">MPEIHPTAVVHPAAEIADDVKIGPFCVVGEHVKLGPGCVLHSHVVIDGPSSFGSGNEFFPFSVIGLKSQDLKYKGEPTYLEVGDNNVFRENATINRATDIGGATRIGNNNLFLVSCHAGHDCQIGNHVIFSGFATAAGHVTVGDYAILAGCCAVHQFVSIGEHAMVGAMARVSQDVLPYTIVEGHPAVTRSVNSIGMQRRGFSEEDLKAVRMCYKKLFVNKKLTVHEALEELRHSGYAENACLRRIIQFVETSERGFCH</sequence>